<gene>
    <name evidence="1" type="primary">pepA</name>
    <name type="ordered locus">Mlg_0558</name>
</gene>
<organism>
    <name type="scientific">Alkalilimnicola ehrlichii (strain ATCC BAA-1101 / DSM 17681 / MLHE-1)</name>
    <dbReference type="NCBI Taxonomy" id="187272"/>
    <lineage>
        <taxon>Bacteria</taxon>
        <taxon>Pseudomonadati</taxon>
        <taxon>Pseudomonadota</taxon>
        <taxon>Gammaproteobacteria</taxon>
        <taxon>Chromatiales</taxon>
        <taxon>Ectothiorhodospiraceae</taxon>
        <taxon>Alkalilimnicola</taxon>
    </lineage>
</organism>
<dbReference type="EC" id="3.4.11.1" evidence="1"/>
<dbReference type="EC" id="3.4.11.10" evidence="1"/>
<dbReference type="EMBL" id="CP000453">
    <property type="protein sequence ID" value="ABI55912.1"/>
    <property type="molecule type" value="Genomic_DNA"/>
</dbReference>
<dbReference type="RefSeq" id="WP_011628307.1">
    <property type="nucleotide sequence ID" value="NC_008340.1"/>
</dbReference>
<dbReference type="SMR" id="Q0AB75"/>
<dbReference type="MEROPS" id="M17.003"/>
<dbReference type="KEGG" id="aeh:Mlg_0558"/>
<dbReference type="eggNOG" id="COG0260">
    <property type="taxonomic scope" value="Bacteria"/>
</dbReference>
<dbReference type="HOGENOM" id="CLU_013734_0_1_6"/>
<dbReference type="OrthoDB" id="9809354at2"/>
<dbReference type="Proteomes" id="UP000001962">
    <property type="component" value="Chromosome"/>
</dbReference>
<dbReference type="GO" id="GO:0005737">
    <property type="term" value="C:cytoplasm"/>
    <property type="evidence" value="ECO:0007669"/>
    <property type="project" value="UniProtKB-SubCell"/>
</dbReference>
<dbReference type="GO" id="GO:0030145">
    <property type="term" value="F:manganese ion binding"/>
    <property type="evidence" value="ECO:0007669"/>
    <property type="project" value="UniProtKB-UniRule"/>
</dbReference>
<dbReference type="GO" id="GO:0070006">
    <property type="term" value="F:metalloaminopeptidase activity"/>
    <property type="evidence" value="ECO:0007669"/>
    <property type="project" value="InterPro"/>
</dbReference>
<dbReference type="GO" id="GO:0006508">
    <property type="term" value="P:proteolysis"/>
    <property type="evidence" value="ECO:0007669"/>
    <property type="project" value="UniProtKB-KW"/>
</dbReference>
<dbReference type="CDD" id="cd00433">
    <property type="entry name" value="Peptidase_M17"/>
    <property type="match status" value="1"/>
</dbReference>
<dbReference type="FunFam" id="3.40.630.10:FF:000004">
    <property type="entry name" value="Probable cytosol aminopeptidase"/>
    <property type="match status" value="1"/>
</dbReference>
<dbReference type="Gene3D" id="3.40.220.10">
    <property type="entry name" value="Leucine Aminopeptidase, subunit E, domain 1"/>
    <property type="match status" value="1"/>
</dbReference>
<dbReference type="Gene3D" id="3.40.630.10">
    <property type="entry name" value="Zn peptidases"/>
    <property type="match status" value="1"/>
</dbReference>
<dbReference type="HAMAP" id="MF_00181">
    <property type="entry name" value="Cytosol_peptidase_M17"/>
    <property type="match status" value="1"/>
</dbReference>
<dbReference type="InterPro" id="IPR011356">
    <property type="entry name" value="Leucine_aapep/pepB"/>
</dbReference>
<dbReference type="InterPro" id="IPR043472">
    <property type="entry name" value="Macro_dom-like"/>
</dbReference>
<dbReference type="InterPro" id="IPR000819">
    <property type="entry name" value="Peptidase_M17_C"/>
</dbReference>
<dbReference type="InterPro" id="IPR023042">
    <property type="entry name" value="Peptidase_M17_leu_NH2_pept"/>
</dbReference>
<dbReference type="InterPro" id="IPR008283">
    <property type="entry name" value="Peptidase_M17_N"/>
</dbReference>
<dbReference type="NCBIfam" id="NF002073">
    <property type="entry name" value="PRK00913.1-2"/>
    <property type="match status" value="1"/>
</dbReference>
<dbReference type="NCBIfam" id="NF002074">
    <property type="entry name" value="PRK00913.1-4"/>
    <property type="match status" value="1"/>
</dbReference>
<dbReference type="NCBIfam" id="NF002077">
    <property type="entry name" value="PRK00913.2-4"/>
    <property type="match status" value="1"/>
</dbReference>
<dbReference type="PANTHER" id="PTHR11963:SF23">
    <property type="entry name" value="CYTOSOL AMINOPEPTIDASE"/>
    <property type="match status" value="1"/>
</dbReference>
<dbReference type="PANTHER" id="PTHR11963">
    <property type="entry name" value="LEUCINE AMINOPEPTIDASE-RELATED"/>
    <property type="match status" value="1"/>
</dbReference>
<dbReference type="Pfam" id="PF00883">
    <property type="entry name" value="Peptidase_M17"/>
    <property type="match status" value="1"/>
</dbReference>
<dbReference type="Pfam" id="PF02789">
    <property type="entry name" value="Peptidase_M17_N"/>
    <property type="match status" value="1"/>
</dbReference>
<dbReference type="PRINTS" id="PR00481">
    <property type="entry name" value="LAMNOPPTDASE"/>
</dbReference>
<dbReference type="SUPFAM" id="SSF52949">
    <property type="entry name" value="Macro domain-like"/>
    <property type="match status" value="1"/>
</dbReference>
<dbReference type="SUPFAM" id="SSF53187">
    <property type="entry name" value="Zn-dependent exopeptidases"/>
    <property type="match status" value="1"/>
</dbReference>
<dbReference type="PROSITE" id="PS00631">
    <property type="entry name" value="CYTOSOL_AP"/>
    <property type="match status" value="1"/>
</dbReference>
<reference key="1">
    <citation type="submission" date="2006-08" db="EMBL/GenBank/DDBJ databases">
        <title>Complete sequence of Alkalilimnicola ehrilichei MLHE-1.</title>
        <authorList>
            <person name="Copeland A."/>
            <person name="Lucas S."/>
            <person name="Lapidus A."/>
            <person name="Barry K."/>
            <person name="Detter J.C."/>
            <person name="Glavina del Rio T."/>
            <person name="Hammon N."/>
            <person name="Israni S."/>
            <person name="Dalin E."/>
            <person name="Tice H."/>
            <person name="Pitluck S."/>
            <person name="Sims D."/>
            <person name="Brettin T."/>
            <person name="Bruce D."/>
            <person name="Han C."/>
            <person name="Tapia R."/>
            <person name="Gilna P."/>
            <person name="Schmutz J."/>
            <person name="Larimer F."/>
            <person name="Land M."/>
            <person name="Hauser L."/>
            <person name="Kyrpides N."/>
            <person name="Mikhailova N."/>
            <person name="Oremland R.S."/>
            <person name="Hoeft S.E."/>
            <person name="Switzer-Blum J."/>
            <person name="Kulp T."/>
            <person name="King G."/>
            <person name="Tabita R."/>
            <person name="Witte B."/>
            <person name="Santini J.M."/>
            <person name="Basu P."/>
            <person name="Hollibaugh J.T."/>
            <person name="Xie G."/>
            <person name="Stolz J.F."/>
            <person name="Richardson P."/>
        </authorList>
    </citation>
    <scope>NUCLEOTIDE SEQUENCE [LARGE SCALE GENOMIC DNA]</scope>
    <source>
        <strain>ATCC BAA-1101 / DSM 17681 / MLHE-1</strain>
    </source>
</reference>
<feature type="chain" id="PRO_1000019877" description="Probable cytosol aminopeptidase">
    <location>
        <begin position="1"/>
        <end position="497"/>
    </location>
</feature>
<feature type="active site" evidence="1">
    <location>
        <position position="280"/>
    </location>
</feature>
<feature type="active site" evidence="1">
    <location>
        <position position="354"/>
    </location>
</feature>
<feature type="binding site" evidence="1">
    <location>
        <position position="268"/>
    </location>
    <ligand>
        <name>Mn(2+)</name>
        <dbReference type="ChEBI" id="CHEBI:29035"/>
        <label>2</label>
    </ligand>
</feature>
<feature type="binding site" evidence="1">
    <location>
        <position position="273"/>
    </location>
    <ligand>
        <name>Mn(2+)</name>
        <dbReference type="ChEBI" id="CHEBI:29035"/>
        <label>1</label>
    </ligand>
</feature>
<feature type="binding site" evidence="1">
    <location>
        <position position="273"/>
    </location>
    <ligand>
        <name>Mn(2+)</name>
        <dbReference type="ChEBI" id="CHEBI:29035"/>
        <label>2</label>
    </ligand>
</feature>
<feature type="binding site" evidence="1">
    <location>
        <position position="291"/>
    </location>
    <ligand>
        <name>Mn(2+)</name>
        <dbReference type="ChEBI" id="CHEBI:29035"/>
        <label>2</label>
    </ligand>
</feature>
<feature type="binding site" evidence="1">
    <location>
        <position position="350"/>
    </location>
    <ligand>
        <name>Mn(2+)</name>
        <dbReference type="ChEBI" id="CHEBI:29035"/>
        <label>1</label>
    </ligand>
</feature>
<feature type="binding site" evidence="1">
    <location>
        <position position="352"/>
    </location>
    <ligand>
        <name>Mn(2+)</name>
        <dbReference type="ChEBI" id="CHEBI:29035"/>
        <label>1</label>
    </ligand>
</feature>
<feature type="binding site" evidence="1">
    <location>
        <position position="352"/>
    </location>
    <ligand>
        <name>Mn(2+)</name>
        <dbReference type="ChEBI" id="CHEBI:29035"/>
        <label>2</label>
    </ligand>
</feature>
<accession>Q0AB75</accession>
<sequence>MDHTVKSKTADTVSSPCAVVGVFERRRLSPAAKAVDEASGGAITAALKRGDIEAKPGQTRLLTDLDNVKAARVLLVGLGVERDLDERTYRKAVTAAAQAAQDCGAGEATFYLPEVEVKTRDLAWRVQQLAIGVTGALYRFDDMKSEAETPRKPLKKLALGVADKAEAKVADEALAQGMAVGRGMSLARDLGNLPGNVCTPSYLADQAKALGKRFDKLKVQSLDRKDMKKLGMGALLAVAQGSQEEPRLIAMEWNGGKKDEQPYVLVGKGITFDTGGISLKPGAAMDEMKFDMCGAASVFGTLQAVAEMNLPINVVGVVPASDNMPDGKATRPGDIIQTLSGQTVEVLNTDAEGRLVLCDALTWSERFKPKEIVDIATLTGACIIALGHHRSAVLGNHPPLVKALQDAGETSGDKCWELPLDPEYDEQLKSNFADMANIGGRPAGTITAASFLARFTKRYQWAHLDIAGTAWLTGEQKGATGRPVPLLTRYLMDRAGA</sequence>
<proteinExistence type="inferred from homology"/>
<name>AMPA_ALKEH</name>
<keyword id="KW-0031">Aminopeptidase</keyword>
<keyword id="KW-0963">Cytoplasm</keyword>
<keyword id="KW-0378">Hydrolase</keyword>
<keyword id="KW-0464">Manganese</keyword>
<keyword id="KW-0479">Metal-binding</keyword>
<keyword id="KW-0645">Protease</keyword>
<keyword id="KW-1185">Reference proteome</keyword>
<comment type="function">
    <text evidence="1">Presumably involved in the processing and regular turnover of intracellular proteins. Catalyzes the removal of unsubstituted N-terminal amino acids from various peptides.</text>
</comment>
<comment type="catalytic activity">
    <reaction evidence="1">
        <text>Release of an N-terminal amino acid, Xaa-|-Yaa-, in which Xaa is preferably Leu, but may be other amino acids including Pro although not Arg or Lys, and Yaa may be Pro. Amino acid amides and methyl esters are also readily hydrolyzed, but rates on arylamides are exceedingly low.</text>
        <dbReference type="EC" id="3.4.11.1"/>
    </reaction>
</comment>
<comment type="catalytic activity">
    <reaction evidence="1">
        <text>Release of an N-terminal amino acid, preferentially leucine, but not glutamic or aspartic acids.</text>
        <dbReference type="EC" id="3.4.11.10"/>
    </reaction>
</comment>
<comment type="cofactor">
    <cofactor evidence="1">
        <name>Mn(2+)</name>
        <dbReference type="ChEBI" id="CHEBI:29035"/>
    </cofactor>
    <text evidence="1">Binds 2 manganese ions per subunit.</text>
</comment>
<comment type="subcellular location">
    <subcellularLocation>
        <location evidence="1">Cytoplasm</location>
    </subcellularLocation>
</comment>
<comment type="similarity">
    <text evidence="1">Belongs to the peptidase M17 family.</text>
</comment>
<evidence type="ECO:0000255" key="1">
    <source>
        <dbReference type="HAMAP-Rule" id="MF_00181"/>
    </source>
</evidence>
<protein>
    <recommendedName>
        <fullName evidence="1">Probable cytosol aminopeptidase</fullName>
        <ecNumber evidence="1">3.4.11.1</ecNumber>
    </recommendedName>
    <alternativeName>
        <fullName evidence="1">Leucine aminopeptidase</fullName>
        <shortName evidence="1">LAP</shortName>
        <ecNumber evidence="1">3.4.11.10</ecNumber>
    </alternativeName>
    <alternativeName>
        <fullName evidence="1">Leucyl aminopeptidase</fullName>
    </alternativeName>
</protein>